<gene>
    <name evidence="1" type="primary">dnaJ</name>
    <name type="ordered locus">lpg2024</name>
</gene>
<evidence type="ECO:0000255" key="1">
    <source>
        <dbReference type="HAMAP-Rule" id="MF_01152"/>
    </source>
</evidence>
<sequence length="379" mass="41280">MEQRDYYELLEVSRNASDAEIKKAYRRLAMKYHPDRNPGDTSAEEKFKEIQKAYNILSDKQKRAAYDQFGHAGVDPSMGGGPGGFGGFGGFGDVFEDIFENIFSGGRGHGRQSRGQRGADLQFNVQLTLEEAAIGKEVEITVPRHGTCTVCEGSGAKKGTSPKTCETCQGMGQVRIQQGFFSIQQTCPTCHGEGKIISDPCASCHGQGRVRESKKINVKIPAGVDNGDRVRLSGEGEAGVHGGGSGDLYVQISLKKHAIFERHENDLHCEVPISFATAALGGSIEVPTLEGRVTLKIPAETQTGKVFRLRSKGMKSVRGYGQGDLLCKVVVETPVNLSREQKELLNKLQDSLENAKGTHSPKTSSWFAGVKKFFEDMKF</sequence>
<dbReference type="EMBL" id="AE017354">
    <property type="protein sequence ID" value="AAU28093.1"/>
    <property type="molecule type" value="Genomic_DNA"/>
</dbReference>
<dbReference type="RefSeq" id="WP_010947740.1">
    <property type="nucleotide sequence ID" value="NC_002942.5"/>
</dbReference>
<dbReference type="RefSeq" id="YP_096040.1">
    <property type="nucleotide sequence ID" value="NC_002942.5"/>
</dbReference>
<dbReference type="SMR" id="Q5ZTY4"/>
<dbReference type="STRING" id="272624.lpg2024"/>
<dbReference type="PaxDb" id="272624-lpg2024"/>
<dbReference type="DNASU" id="3078697"/>
<dbReference type="GeneID" id="57036018"/>
<dbReference type="KEGG" id="lpn:lpg2024"/>
<dbReference type="PATRIC" id="fig|272624.6.peg.2120"/>
<dbReference type="eggNOG" id="COG0484">
    <property type="taxonomic scope" value="Bacteria"/>
</dbReference>
<dbReference type="HOGENOM" id="CLU_017633_0_7_6"/>
<dbReference type="OrthoDB" id="9779889at2"/>
<dbReference type="Proteomes" id="UP000000609">
    <property type="component" value="Chromosome"/>
</dbReference>
<dbReference type="GO" id="GO:0005737">
    <property type="term" value="C:cytoplasm"/>
    <property type="evidence" value="ECO:0007669"/>
    <property type="project" value="UniProtKB-SubCell"/>
</dbReference>
<dbReference type="GO" id="GO:0005524">
    <property type="term" value="F:ATP binding"/>
    <property type="evidence" value="ECO:0007669"/>
    <property type="project" value="InterPro"/>
</dbReference>
<dbReference type="GO" id="GO:0031072">
    <property type="term" value="F:heat shock protein binding"/>
    <property type="evidence" value="ECO:0007669"/>
    <property type="project" value="InterPro"/>
</dbReference>
<dbReference type="GO" id="GO:0051082">
    <property type="term" value="F:unfolded protein binding"/>
    <property type="evidence" value="ECO:0007669"/>
    <property type="project" value="UniProtKB-UniRule"/>
</dbReference>
<dbReference type="GO" id="GO:0008270">
    <property type="term" value="F:zinc ion binding"/>
    <property type="evidence" value="ECO:0007669"/>
    <property type="project" value="UniProtKB-UniRule"/>
</dbReference>
<dbReference type="GO" id="GO:0051085">
    <property type="term" value="P:chaperone cofactor-dependent protein refolding"/>
    <property type="evidence" value="ECO:0007669"/>
    <property type="project" value="TreeGrafter"/>
</dbReference>
<dbReference type="GO" id="GO:0006260">
    <property type="term" value="P:DNA replication"/>
    <property type="evidence" value="ECO:0007669"/>
    <property type="project" value="UniProtKB-KW"/>
</dbReference>
<dbReference type="GO" id="GO:0042026">
    <property type="term" value="P:protein refolding"/>
    <property type="evidence" value="ECO:0007669"/>
    <property type="project" value="TreeGrafter"/>
</dbReference>
<dbReference type="GO" id="GO:0009408">
    <property type="term" value="P:response to heat"/>
    <property type="evidence" value="ECO:0007669"/>
    <property type="project" value="InterPro"/>
</dbReference>
<dbReference type="CDD" id="cd06257">
    <property type="entry name" value="DnaJ"/>
    <property type="match status" value="1"/>
</dbReference>
<dbReference type="CDD" id="cd10747">
    <property type="entry name" value="DnaJ_C"/>
    <property type="match status" value="1"/>
</dbReference>
<dbReference type="CDD" id="cd10719">
    <property type="entry name" value="DnaJ_zf"/>
    <property type="match status" value="1"/>
</dbReference>
<dbReference type="FunFam" id="1.10.287.110:FF:000034">
    <property type="entry name" value="Chaperone protein DnaJ"/>
    <property type="match status" value="1"/>
</dbReference>
<dbReference type="FunFam" id="2.10.230.10:FF:000002">
    <property type="entry name" value="Molecular chaperone DnaJ"/>
    <property type="match status" value="1"/>
</dbReference>
<dbReference type="FunFam" id="2.60.260.20:FF:000004">
    <property type="entry name" value="Molecular chaperone DnaJ"/>
    <property type="match status" value="1"/>
</dbReference>
<dbReference type="Gene3D" id="1.10.287.110">
    <property type="entry name" value="DnaJ domain"/>
    <property type="match status" value="1"/>
</dbReference>
<dbReference type="Gene3D" id="2.10.230.10">
    <property type="entry name" value="Heat shock protein DnaJ, cysteine-rich domain"/>
    <property type="match status" value="1"/>
</dbReference>
<dbReference type="Gene3D" id="2.60.260.20">
    <property type="entry name" value="Urease metallochaperone UreE, N-terminal domain"/>
    <property type="match status" value="2"/>
</dbReference>
<dbReference type="HAMAP" id="MF_01152">
    <property type="entry name" value="DnaJ"/>
    <property type="match status" value="1"/>
</dbReference>
<dbReference type="InterPro" id="IPR012724">
    <property type="entry name" value="DnaJ"/>
</dbReference>
<dbReference type="InterPro" id="IPR002939">
    <property type="entry name" value="DnaJ_C"/>
</dbReference>
<dbReference type="InterPro" id="IPR001623">
    <property type="entry name" value="DnaJ_domain"/>
</dbReference>
<dbReference type="InterPro" id="IPR018253">
    <property type="entry name" value="DnaJ_domain_CS"/>
</dbReference>
<dbReference type="InterPro" id="IPR008971">
    <property type="entry name" value="HSP40/DnaJ_pept-bd"/>
</dbReference>
<dbReference type="InterPro" id="IPR001305">
    <property type="entry name" value="HSP_DnaJ_Cys-rich_dom"/>
</dbReference>
<dbReference type="InterPro" id="IPR036410">
    <property type="entry name" value="HSP_DnaJ_Cys-rich_dom_sf"/>
</dbReference>
<dbReference type="InterPro" id="IPR036869">
    <property type="entry name" value="J_dom_sf"/>
</dbReference>
<dbReference type="NCBIfam" id="TIGR02349">
    <property type="entry name" value="DnaJ_bact"/>
    <property type="match status" value="1"/>
</dbReference>
<dbReference type="NCBIfam" id="NF008035">
    <property type="entry name" value="PRK10767.1"/>
    <property type="match status" value="1"/>
</dbReference>
<dbReference type="PANTHER" id="PTHR43096:SF48">
    <property type="entry name" value="CHAPERONE PROTEIN DNAJ"/>
    <property type="match status" value="1"/>
</dbReference>
<dbReference type="PANTHER" id="PTHR43096">
    <property type="entry name" value="DNAJ HOMOLOG 1, MITOCHONDRIAL-RELATED"/>
    <property type="match status" value="1"/>
</dbReference>
<dbReference type="Pfam" id="PF00226">
    <property type="entry name" value="DnaJ"/>
    <property type="match status" value="1"/>
</dbReference>
<dbReference type="Pfam" id="PF01556">
    <property type="entry name" value="DnaJ_C"/>
    <property type="match status" value="1"/>
</dbReference>
<dbReference type="Pfam" id="PF00684">
    <property type="entry name" value="DnaJ_CXXCXGXG"/>
    <property type="match status" value="1"/>
</dbReference>
<dbReference type="PRINTS" id="PR00625">
    <property type="entry name" value="JDOMAIN"/>
</dbReference>
<dbReference type="SMART" id="SM00271">
    <property type="entry name" value="DnaJ"/>
    <property type="match status" value="1"/>
</dbReference>
<dbReference type="SUPFAM" id="SSF46565">
    <property type="entry name" value="Chaperone J-domain"/>
    <property type="match status" value="1"/>
</dbReference>
<dbReference type="SUPFAM" id="SSF57938">
    <property type="entry name" value="DnaJ/Hsp40 cysteine-rich domain"/>
    <property type="match status" value="1"/>
</dbReference>
<dbReference type="SUPFAM" id="SSF49493">
    <property type="entry name" value="HSP40/DnaJ peptide-binding domain"/>
    <property type="match status" value="2"/>
</dbReference>
<dbReference type="PROSITE" id="PS00636">
    <property type="entry name" value="DNAJ_1"/>
    <property type="match status" value="1"/>
</dbReference>
<dbReference type="PROSITE" id="PS50076">
    <property type="entry name" value="DNAJ_2"/>
    <property type="match status" value="1"/>
</dbReference>
<dbReference type="PROSITE" id="PS51188">
    <property type="entry name" value="ZF_CR"/>
    <property type="match status" value="1"/>
</dbReference>
<keyword id="KW-0143">Chaperone</keyword>
<keyword id="KW-0963">Cytoplasm</keyword>
<keyword id="KW-0235">DNA replication</keyword>
<keyword id="KW-0479">Metal-binding</keyword>
<keyword id="KW-1185">Reference proteome</keyword>
<keyword id="KW-0677">Repeat</keyword>
<keyword id="KW-0346">Stress response</keyword>
<keyword id="KW-0862">Zinc</keyword>
<keyword id="KW-0863">Zinc-finger</keyword>
<reference key="1">
    <citation type="journal article" date="2004" name="Science">
        <title>The genomic sequence of the accidental pathogen Legionella pneumophila.</title>
        <authorList>
            <person name="Chien M."/>
            <person name="Morozova I."/>
            <person name="Shi S."/>
            <person name="Sheng H."/>
            <person name="Chen J."/>
            <person name="Gomez S.M."/>
            <person name="Asamani G."/>
            <person name="Hill K."/>
            <person name="Nuara J."/>
            <person name="Feder M."/>
            <person name="Rineer J."/>
            <person name="Greenberg J.J."/>
            <person name="Steshenko V."/>
            <person name="Park S.H."/>
            <person name="Zhao B."/>
            <person name="Teplitskaya E."/>
            <person name="Edwards J.R."/>
            <person name="Pampou S."/>
            <person name="Georghiou A."/>
            <person name="Chou I.-C."/>
            <person name="Iannuccilli W."/>
            <person name="Ulz M.E."/>
            <person name="Kim D.H."/>
            <person name="Geringer-Sameth A."/>
            <person name="Goldsberry C."/>
            <person name="Morozov P."/>
            <person name="Fischer S.G."/>
            <person name="Segal G."/>
            <person name="Qu X."/>
            <person name="Rzhetsky A."/>
            <person name="Zhang P."/>
            <person name="Cayanis E."/>
            <person name="De Jong P.J."/>
            <person name="Ju J."/>
            <person name="Kalachikov S."/>
            <person name="Shuman H.A."/>
            <person name="Russo J.J."/>
        </authorList>
    </citation>
    <scope>NUCLEOTIDE SEQUENCE [LARGE SCALE GENOMIC DNA]</scope>
    <source>
        <strain>Philadelphia 1 / ATCC 33152 / DSM 7513</strain>
    </source>
</reference>
<proteinExistence type="inferred from homology"/>
<organism>
    <name type="scientific">Legionella pneumophila subsp. pneumophila (strain Philadelphia 1 / ATCC 33152 / DSM 7513)</name>
    <dbReference type="NCBI Taxonomy" id="272624"/>
    <lineage>
        <taxon>Bacteria</taxon>
        <taxon>Pseudomonadati</taxon>
        <taxon>Pseudomonadota</taxon>
        <taxon>Gammaproteobacteria</taxon>
        <taxon>Legionellales</taxon>
        <taxon>Legionellaceae</taxon>
        <taxon>Legionella</taxon>
    </lineage>
</organism>
<comment type="function">
    <text evidence="1">Participates actively in the response to hyperosmotic and heat shock by preventing the aggregation of stress-denatured proteins and by disaggregating proteins, also in an autonomous, DnaK-independent fashion. Unfolded proteins bind initially to DnaJ; upon interaction with the DnaJ-bound protein, DnaK hydrolyzes its bound ATP, resulting in the formation of a stable complex. GrpE releases ADP from DnaK; ATP binding to DnaK triggers the release of the substrate protein, thus completing the reaction cycle. Several rounds of ATP-dependent interactions between DnaJ, DnaK and GrpE are required for fully efficient folding. Also involved, together with DnaK and GrpE, in the DNA replication of plasmids through activation of initiation proteins.</text>
</comment>
<comment type="cofactor">
    <cofactor evidence="1">
        <name>Zn(2+)</name>
        <dbReference type="ChEBI" id="CHEBI:29105"/>
    </cofactor>
    <text evidence="1">Binds 2 Zn(2+) ions per monomer.</text>
</comment>
<comment type="subunit">
    <text evidence="1">Homodimer.</text>
</comment>
<comment type="subcellular location">
    <subcellularLocation>
        <location evidence="1">Cytoplasm</location>
    </subcellularLocation>
</comment>
<comment type="domain">
    <text evidence="1">The J domain is necessary and sufficient to stimulate DnaK ATPase activity. Zinc center 1 plays an important role in the autonomous, DnaK-independent chaperone activity of DnaJ. Zinc center 2 is essential for interaction with DnaK and for DnaJ activity.</text>
</comment>
<comment type="similarity">
    <text evidence="1">Belongs to the DnaJ family.</text>
</comment>
<name>DNAJ_LEGPH</name>
<protein>
    <recommendedName>
        <fullName evidence="1">Chaperone protein DnaJ</fullName>
    </recommendedName>
</protein>
<accession>Q5ZTY4</accession>
<feature type="chain" id="PRO_0000070807" description="Chaperone protein DnaJ">
    <location>
        <begin position="1"/>
        <end position="379"/>
    </location>
</feature>
<feature type="domain" description="J" evidence="1">
    <location>
        <begin position="5"/>
        <end position="70"/>
    </location>
</feature>
<feature type="repeat" description="CXXCXGXG motif">
    <location>
        <begin position="148"/>
        <end position="155"/>
    </location>
</feature>
<feature type="repeat" description="CXXCXGXG motif">
    <location>
        <begin position="165"/>
        <end position="172"/>
    </location>
</feature>
<feature type="repeat" description="CXXCXGXG motif">
    <location>
        <begin position="187"/>
        <end position="194"/>
    </location>
</feature>
<feature type="repeat" description="CXXCXGXG motif">
    <location>
        <begin position="201"/>
        <end position="208"/>
    </location>
</feature>
<feature type="zinc finger region" description="CR-type" evidence="1">
    <location>
        <begin position="135"/>
        <end position="213"/>
    </location>
</feature>
<feature type="binding site" evidence="1">
    <location>
        <position position="148"/>
    </location>
    <ligand>
        <name>Zn(2+)</name>
        <dbReference type="ChEBI" id="CHEBI:29105"/>
        <label>1</label>
    </ligand>
</feature>
<feature type="binding site" evidence="1">
    <location>
        <position position="151"/>
    </location>
    <ligand>
        <name>Zn(2+)</name>
        <dbReference type="ChEBI" id="CHEBI:29105"/>
        <label>1</label>
    </ligand>
</feature>
<feature type="binding site" evidence="1">
    <location>
        <position position="165"/>
    </location>
    <ligand>
        <name>Zn(2+)</name>
        <dbReference type="ChEBI" id="CHEBI:29105"/>
        <label>2</label>
    </ligand>
</feature>
<feature type="binding site" evidence="1">
    <location>
        <position position="168"/>
    </location>
    <ligand>
        <name>Zn(2+)</name>
        <dbReference type="ChEBI" id="CHEBI:29105"/>
        <label>2</label>
    </ligand>
</feature>
<feature type="binding site" evidence="1">
    <location>
        <position position="187"/>
    </location>
    <ligand>
        <name>Zn(2+)</name>
        <dbReference type="ChEBI" id="CHEBI:29105"/>
        <label>2</label>
    </ligand>
</feature>
<feature type="binding site" evidence="1">
    <location>
        <position position="190"/>
    </location>
    <ligand>
        <name>Zn(2+)</name>
        <dbReference type="ChEBI" id="CHEBI:29105"/>
        <label>2</label>
    </ligand>
</feature>
<feature type="binding site" evidence="1">
    <location>
        <position position="201"/>
    </location>
    <ligand>
        <name>Zn(2+)</name>
        <dbReference type="ChEBI" id="CHEBI:29105"/>
        <label>1</label>
    </ligand>
</feature>
<feature type="binding site" evidence="1">
    <location>
        <position position="204"/>
    </location>
    <ligand>
        <name>Zn(2+)</name>
        <dbReference type="ChEBI" id="CHEBI:29105"/>
        <label>1</label>
    </ligand>
</feature>